<evidence type="ECO:0000250" key="1"/>
<evidence type="ECO:0000250" key="2">
    <source>
        <dbReference type="UniProtKB" id="Q8WY22"/>
    </source>
</evidence>
<evidence type="ECO:0000255" key="3"/>
<evidence type="ECO:0000269" key="4">
    <source>
    </source>
</evidence>
<evidence type="ECO:0000305" key="5"/>
<evidence type="ECO:0000312" key="6">
    <source>
        <dbReference type="EMBL" id="AAH39941.1"/>
    </source>
</evidence>
<evidence type="ECO:0000312" key="7">
    <source>
        <dbReference type="EMBL" id="BAB27196.1"/>
    </source>
</evidence>
<evidence type="ECO:0000312" key="8">
    <source>
        <dbReference type="EMBL" id="BAC31516.1"/>
    </source>
</evidence>
<evidence type="ECO:0000312" key="9">
    <source>
        <dbReference type="EMBL" id="BAC31982.1"/>
    </source>
</evidence>
<evidence type="ECO:0000312" key="10">
    <source>
        <dbReference type="EMBL" id="BAE25425.1"/>
    </source>
</evidence>
<evidence type="ECO:0000312" key="11">
    <source>
        <dbReference type="MGI" id="MGI:1924059"/>
    </source>
</evidence>
<proteinExistence type="evidence at protein level"/>
<gene>
    <name evidence="11" type="primary">Bri3bp</name>
</gene>
<protein>
    <recommendedName>
        <fullName evidence="5">BRI3-binding protein</fullName>
        <shortName>I3-binding protein</shortName>
    </recommendedName>
</protein>
<reference evidence="5 8" key="1">
    <citation type="journal article" date="2005" name="Science">
        <title>The transcriptional landscape of the mammalian genome.</title>
        <authorList>
            <person name="Carninci P."/>
            <person name="Kasukawa T."/>
            <person name="Katayama S."/>
            <person name="Gough J."/>
            <person name="Frith M.C."/>
            <person name="Maeda N."/>
            <person name="Oyama R."/>
            <person name="Ravasi T."/>
            <person name="Lenhard B."/>
            <person name="Wells C."/>
            <person name="Kodzius R."/>
            <person name="Shimokawa K."/>
            <person name="Bajic V.B."/>
            <person name="Brenner S.E."/>
            <person name="Batalov S."/>
            <person name="Forrest A.R."/>
            <person name="Zavolan M."/>
            <person name="Davis M.J."/>
            <person name="Wilming L.G."/>
            <person name="Aidinis V."/>
            <person name="Allen J.E."/>
            <person name="Ambesi-Impiombato A."/>
            <person name="Apweiler R."/>
            <person name="Aturaliya R.N."/>
            <person name="Bailey T.L."/>
            <person name="Bansal M."/>
            <person name="Baxter L."/>
            <person name="Beisel K.W."/>
            <person name="Bersano T."/>
            <person name="Bono H."/>
            <person name="Chalk A.M."/>
            <person name="Chiu K.P."/>
            <person name="Choudhary V."/>
            <person name="Christoffels A."/>
            <person name="Clutterbuck D.R."/>
            <person name="Crowe M.L."/>
            <person name="Dalla E."/>
            <person name="Dalrymple B.P."/>
            <person name="de Bono B."/>
            <person name="Della Gatta G."/>
            <person name="di Bernardo D."/>
            <person name="Down T."/>
            <person name="Engstrom P."/>
            <person name="Fagiolini M."/>
            <person name="Faulkner G."/>
            <person name="Fletcher C.F."/>
            <person name="Fukushima T."/>
            <person name="Furuno M."/>
            <person name="Futaki S."/>
            <person name="Gariboldi M."/>
            <person name="Georgii-Hemming P."/>
            <person name="Gingeras T.R."/>
            <person name="Gojobori T."/>
            <person name="Green R.E."/>
            <person name="Gustincich S."/>
            <person name="Harbers M."/>
            <person name="Hayashi Y."/>
            <person name="Hensch T.K."/>
            <person name="Hirokawa N."/>
            <person name="Hill D."/>
            <person name="Huminiecki L."/>
            <person name="Iacono M."/>
            <person name="Ikeo K."/>
            <person name="Iwama A."/>
            <person name="Ishikawa T."/>
            <person name="Jakt M."/>
            <person name="Kanapin A."/>
            <person name="Katoh M."/>
            <person name="Kawasawa Y."/>
            <person name="Kelso J."/>
            <person name="Kitamura H."/>
            <person name="Kitano H."/>
            <person name="Kollias G."/>
            <person name="Krishnan S.P."/>
            <person name="Kruger A."/>
            <person name="Kummerfeld S.K."/>
            <person name="Kurochkin I.V."/>
            <person name="Lareau L.F."/>
            <person name="Lazarevic D."/>
            <person name="Lipovich L."/>
            <person name="Liu J."/>
            <person name="Liuni S."/>
            <person name="McWilliam S."/>
            <person name="Madan Babu M."/>
            <person name="Madera M."/>
            <person name="Marchionni L."/>
            <person name="Matsuda H."/>
            <person name="Matsuzawa S."/>
            <person name="Miki H."/>
            <person name="Mignone F."/>
            <person name="Miyake S."/>
            <person name="Morris K."/>
            <person name="Mottagui-Tabar S."/>
            <person name="Mulder N."/>
            <person name="Nakano N."/>
            <person name="Nakauchi H."/>
            <person name="Ng P."/>
            <person name="Nilsson R."/>
            <person name="Nishiguchi S."/>
            <person name="Nishikawa S."/>
            <person name="Nori F."/>
            <person name="Ohara O."/>
            <person name="Okazaki Y."/>
            <person name="Orlando V."/>
            <person name="Pang K.C."/>
            <person name="Pavan W.J."/>
            <person name="Pavesi G."/>
            <person name="Pesole G."/>
            <person name="Petrovsky N."/>
            <person name="Piazza S."/>
            <person name="Reed J."/>
            <person name="Reid J.F."/>
            <person name="Ring B.Z."/>
            <person name="Ringwald M."/>
            <person name="Rost B."/>
            <person name="Ruan Y."/>
            <person name="Salzberg S.L."/>
            <person name="Sandelin A."/>
            <person name="Schneider C."/>
            <person name="Schoenbach C."/>
            <person name="Sekiguchi K."/>
            <person name="Semple C.A."/>
            <person name="Seno S."/>
            <person name="Sessa L."/>
            <person name="Sheng Y."/>
            <person name="Shibata Y."/>
            <person name="Shimada H."/>
            <person name="Shimada K."/>
            <person name="Silva D."/>
            <person name="Sinclair B."/>
            <person name="Sperling S."/>
            <person name="Stupka E."/>
            <person name="Sugiura K."/>
            <person name="Sultana R."/>
            <person name="Takenaka Y."/>
            <person name="Taki K."/>
            <person name="Tammoja K."/>
            <person name="Tan S.L."/>
            <person name="Tang S."/>
            <person name="Taylor M.S."/>
            <person name="Tegner J."/>
            <person name="Teichmann S.A."/>
            <person name="Ueda H.R."/>
            <person name="van Nimwegen E."/>
            <person name="Verardo R."/>
            <person name="Wei C.L."/>
            <person name="Yagi K."/>
            <person name="Yamanishi H."/>
            <person name="Zabarovsky E."/>
            <person name="Zhu S."/>
            <person name="Zimmer A."/>
            <person name="Hide W."/>
            <person name="Bult C."/>
            <person name="Grimmond S.M."/>
            <person name="Teasdale R.D."/>
            <person name="Liu E.T."/>
            <person name="Brusic V."/>
            <person name="Quackenbush J."/>
            <person name="Wahlestedt C."/>
            <person name="Mattick J.S."/>
            <person name="Hume D.A."/>
            <person name="Kai C."/>
            <person name="Sasaki D."/>
            <person name="Tomaru Y."/>
            <person name="Fukuda S."/>
            <person name="Kanamori-Katayama M."/>
            <person name="Suzuki M."/>
            <person name="Aoki J."/>
            <person name="Arakawa T."/>
            <person name="Iida J."/>
            <person name="Imamura K."/>
            <person name="Itoh M."/>
            <person name="Kato T."/>
            <person name="Kawaji H."/>
            <person name="Kawagashira N."/>
            <person name="Kawashima T."/>
            <person name="Kojima M."/>
            <person name="Kondo S."/>
            <person name="Konno H."/>
            <person name="Nakano K."/>
            <person name="Ninomiya N."/>
            <person name="Nishio T."/>
            <person name="Okada M."/>
            <person name="Plessy C."/>
            <person name="Shibata K."/>
            <person name="Shiraki T."/>
            <person name="Suzuki S."/>
            <person name="Tagami M."/>
            <person name="Waki K."/>
            <person name="Watahiki A."/>
            <person name="Okamura-Oho Y."/>
            <person name="Suzuki H."/>
            <person name="Kawai J."/>
            <person name="Hayashizaki Y."/>
        </authorList>
    </citation>
    <scope>NUCLEOTIDE SEQUENCE [LARGE SCALE MRNA]</scope>
    <source>
        <strain evidence="8">C57BL/6J</strain>
        <tissue evidence="8">Cerebellum</tissue>
        <tissue evidence="10">Embryo</tissue>
        <tissue evidence="7">Embryonic stem cell</tissue>
        <tissue evidence="9">Retina</tissue>
    </source>
</reference>
<reference evidence="6" key="2">
    <citation type="journal article" date="2004" name="Genome Res.">
        <title>The status, quality, and expansion of the NIH full-length cDNA project: the Mammalian Gene Collection (MGC).</title>
        <authorList>
            <consortium name="The MGC Project Team"/>
        </authorList>
    </citation>
    <scope>NUCLEOTIDE SEQUENCE [LARGE SCALE MRNA]</scope>
    <source>
        <strain evidence="6">Czech II</strain>
        <tissue evidence="6">Mammary gland</tissue>
    </source>
</reference>
<reference key="3">
    <citation type="journal article" date="2008" name="Int. J. Cancer">
        <title>HCCRBP-1 directly interacting with HCCR-1 induces tumorigenesis through P53 stabilization.</title>
        <authorList>
            <person name="Ha S.A."/>
            <person name="Shin S.M."/>
            <person name="Lee Y.J."/>
            <person name="Kim S."/>
            <person name="Kim H.K."/>
            <person name="Namkoong H."/>
            <person name="Lee H."/>
            <person name="Lee Y.S."/>
            <person name="Cho Y.S."/>
            <person name="Park Y.G."/>
            <person name="Jeon H.M."/>
            <person name="Oh C."/>
            <person name="Kim J.W."/>
        </authorList>
    </citation>
    <scope>FUNCTION</scope>
    <scope>SUBCELLULAR LOCATION</scope>
    <scope>PROTO-ONCOGENICITY</scope>
</reference>
<reference key="4">
    <citation type="journal article" date="2010" name="Cell">
        <title>A tissue-specific atlas of mouse protein phosphorylation and expression.</title>
        <authorList>
            <person name="Huttlin E.L."/>
            <person name="Jedrychowski M.P."/>
            <person name="Elias J.E."/>
            <person name="Goswami T."/>
            <person name="Rad R."/>
            <person name="Beausoleil S.A."/>
            <person name="Villen J."/>
            <person name="Haas W."/>
            <person name="Sowa M.E."/>
            <person name="Gygi S.P."/>
        </authorList>
    </citation>
    <scope>IDENTIFICATION BY MASS SPECTROMETRY [LARGE SCALE ANALYSIS]</scope>
    <source>
        <tissue>Brain</tissue>
        <tissue>Brown adipose tissue</tissue>
        <tissue>Heart</tissue>
        <tissue>Kidney</tissue>
        <tissue>Liver</tissue>
        <tissue>Lung</tissue>
        <tissue>Pancreas</tissue>
        <tissue>Spleen</tissue>
        <tissue>Testis</tissue>
    </source>
</reference>
<feature type="chain" id="PRO_0000229748" description="BRI3-binding protein">
    <location>
        <begin position="1"/>
        <end position="253"/>
    </location>
</feature>
<feature type="transmembrane region" description="Helical" evidence="3">
    <location>
        <begin position="19"/>
        <end position="39"/>
    </location>
</feature>
<feature type="transmembrane region" description="Helical" evidence="3">
    <location>
        <begin position="131"/>
        <end position="151"/>
    </location>
</feature>
<feature type="transmembrane region" description="Helical" evidence="3">
    <location>
        <begin position="164"/>
        <end position="181"/>
    </location>
</feature>
<feature type="transmembrane region" description="Helical" evidence="3">
    <location>
        <begin position="190"/>
        <end position="210"/>
    </location>
</feature>
<feature type="coiled-coil region" evidence="3">
    <location>
        <begin position="219"/>
        <end position="253"/>
    </location>
</feature>
<feature type="modified residue" description="Phosphoserine" evidence="2">
    <location>
        <position position="250"/>
    </location>
</feature>
<feature type="sequence conflict" description="In Ref. 1; BAC31982." evidence="5" ref="1">
    <original>Q</original>
    <variation>E</variation>
    <location>
        <position position="7"/>
    </location>
</feature>
<feature type="sequence conflict" description="In Ref. 1; BAB27196." evidence="5" ref="1">
    <original>L</original>
    <variation>F</variation>
    <location>
        <position position="217"/>
    </location>
</feature>
<sequence length="253" mass="28263">MGARASQEPRTRVRAGLRVLLPVLLLALLLLALVAPGAQGARGRGAADKNSHRRATSSFSQSVSSLFGEDNVRAAQKLLSRLTERFVQGVDMFLETLWKVWMELLEVLGLDVSNLSQYFSPASVSNSPTRALVLVGVVLLAYWFLSLTLGFTFSLLHLVFGRFFWLVRVILFSMSCVYILHKYEGEPEHAVLPLCVVVAIYFMTGPMGYWRGSPGGLCSPSVEEKLEHLENQVRLLNIRLNRVLENLDRSKDK</sequence>
<name>BRI3B_MOUSE</name>
<comment type="function">
    <text evidence="4">Involved in tumorigenesis and may function by stabilizing p53/TP53.</text>
</comment>
<comment type="subunit">
    <text evidence="2">Interacts with LETMD1. Interacts with BRI3. Interacts with BRI3; the interaction is weak (By similarity). Interacts with TMEM238L (By similarity).</text>
</comment>
<comment type="subcellular location">
    <subcellularLocation>
        <location evidence="1">Mitochondrion outer membrane</location>
        <topology evidence="1">Multi-pass membrane protein</topology>
    </subcellularLocation>
</comment>
<organism>
    <name type="scientific">Mus musculus</name>
    <name type="common">Mouse</name>
    <dbReference type="NCBI Taxonomy" id="10090"/>
    <lineage>
        <taxon>Eukaryota</taxon>
        <taxon>Metazoa</taxon>
        <taxon>Chordata</taxon>
        <taxon>Craniata</taxon>
        <taxon>Vertebrata</taxon>
        <taxon>Euteleostomi</taxon>
        <taxon>Mammalia</taxon>
        <taxon>Eutheria</taxon>
        <taxon>Euarchontoglires</taxon>
        <taxon>Glires</taxon>
        <taxon>Rodentia</taxon>
        <taxon>Myomorpha</taxon>
        <taxon>Muroidea</taxon>
        <taxon>Muridae</taxon>
        <taxon>Murinae</taxon>
        <taxon>Mus</taxon>
        <taxon>Mus</taxon>
    </lineage>
</organism>
<keyword id="KW-0175">Coiled coil</keyword>
<keyword id="KW-0472">Membrane</keyword>
<keyword id="KW-0496">Mitochondrion</keyword>
<keyword id="KW-1000">Mitochondrion outer membrane</keyword>
<keyword id="KW-0597">Phosphoprotein</keyword>
<keyword id="KW-0656">Proto-oncogene</keyword>
<keyword id="KW-1185">Reference proteome</keyword>
<keyword id="KW-0812">Transmembrane</keyword>
<keyword id="KW-1133">Transmembrane helix</keyword>
<accession>Q8BXV2</accession>
<accession>Q8BXP1</accession>
<accession>Q9CWE5</accession>
<dbReference type="EMBL" id="AK010810">
    <property type="protein sequence ID" value="BAB27196.1"/>
    <property type="molecule type" value="mRNA"/>
</dbReference>
<dbReference type="EMBL" id="AK043288">
    <property type="protein sequence ID" value="BAC31516.1"/>
    <property type="molecule type" value="mRNA"/>
</dbReference>
<dbReference type="EMBL" id="AK044565">
    <property type="protein sequence ID" value="BAC31982.1"/>
    <property type="molecule type" value="mRNA"/>
</dbReference>
<dbReference type="EMBL" id="AK143538">
    <property type="protein sequence ID" value="BAE25425.1"/>
    <property type="molecule type" value="mRNA"/>
</dbReference>
<dbReference type="EMBL" id="BC039941">
    <property type="protein sequence ID" value="AAH39941.1"/>
    <property type="molecule type" value="mRNA"/>
</dbReference>
<dbReference type="CCDS" id="CCDS19686.1"/>
<dbReference type="RefSeq" id="NP_084028.1">
    <property type="nucleotide sequence ID" value="NM_029752.2"/>
</dbReference>
<dbReference type="SMR" id="Q8BXV2"/>
<dbReference type="BioGRID" id="218329">
    <property type="interactions" value="7"/>
</dbReference>
<dbReference type="FunCoup" id="Q8BXV2">
    <property type="interactions" value="961"/>
</dbReference>
<dbReference type="IntAct" id="Q8BXV2">
    <property type="interactions" value="1"/>
</dbReference>
<dbReference type="STRING" id="10090.ENSMUSP00000037609"/>
<dbReference type="TCDB" id="1.A.74.2.1">
    <property type="family name" value="the mitsugumin 23 (mg23) family"/>
</dbReference>
<dbReference type="GlyGen" id="Q8BXV2">
    <property type="glycosylation" value="2 sites, 1 N-linked glycan (1 site), 1 O-linked glycan (1 site)"/>
</dbReference>
<dbReference type="iPTMnet" id="Q8BXV2"/>
<dbReference type="PhosphoSitePlus" id="Q8BXV2"/>
<dbReference type="SwissPalm" id="Q8BXV2"/>
<dbReference type="PaxDb" id="10090-ENSMUSP00000037609"/>
<dbReference type="PeptideAtlas" id="Q8BXV2"/>
<dbReference type="ProteomicsDB" id="273842"/>
<dbReference type="Pumba" id="Q8BXV2"/>
<dbReference type="Antibodypedia" id="2692">
    <property type="antibodies" value="162 antibodies from 28 providers"/>
</dbReference>
<dbReference type="Ensembl" id="ENSMUST00000049040.14">
    <property type="protein sequence ID" value="ENSMUSP00000037609.10"/>
    <property type="gene ID" value="ENSMUSG00000037905.14"/>
</dbReference>
<dbReference type="GeneID" id="76809"/>
<dbReference type="KEGG" id="mmu:76809"/>
<dbReference type="UCSC" id="uc008zrr.1">
    <property type="organism name" value="mouse"/>
</dbReference>
<dbReference type="AGR" id="MGI:1924059"/>
<dbReference type="CTD" id="140707"/>
<dbReference type="MGI" id="MGI:1924059">
    <property type="gene designation" value="Bri3bp"/>
</dbReference>
<dbReference type="VEuPathDB" id="HostDB:ENSMUSG00000037905"/>
<dbReference type="eggNOG" id="ENOG502QRNV">
    <property type="taxonomic scope" value="Eukaryota"/>
</dbReference>
<dbReference type="GeneTree" id="ENSGT00390000002024"/>
<dbReference type="HOGENOM" id="CLU_095006_0_0_1"/>
<dbReference type="InParanoid" id="Q8BXV2"/>
<dbReference type="OMA" id="LMDTFWR"/>
<dbReference type="OrthoDB" id="9889463at2759"/>
<dbReference type="PhylomeDB" id="Q8BXV2"/>
<dbReference type="TreeFam" id="TF332238"/>
<dbReference type="BioGRID-ORCS" id="76809">
    <property type="hits" value="2 hits in 46 CRISPR screens"/>
</dbReference>
<dbReference type="CD-CODE" id="CE726F99">
    <property type="entry name" value="Postsynaptic density"/>
</dbReference>
<dbReference type="ChiTaRS" id="Bri3bp">
    <property type="organism name" value="mouse"/>
</dbReference>
<dbReference type="PRO" id="PR:Q8BXV2"/>
<dbReference type="Proteomes" id="UP000000589">
    <property type="component" value="Chromosome 5"/>
</dbReference>
<dbReference type="RNAct" id="Q8BXV2">
    <property type="molecule type" value="protein"/>
</dbReference>
<dbReference type="Bgee" id="ENSMUSG00000037905">
    <property type="expression patterns" value="Expressed in manus and 223 other cell types or tissues"/>
</dbReference>
<dbReference type="ExpressionAtlas" id="Q8BXV2">
    <property type="expression patterns" value="baseline and differential"/>
</dbReference>
<dbReference type="GO" id="GO:0005741">
    <property type="term" value="C:mitochondrial outer membrane"/>
    <property type="evidence" value="ECO:0007669"/>
    <property type="project" value="UniProtKB-SubCell"/>
</dbReference>
<dbReference type="InterPro" id="IPR033367">
    <property type="entry name" value="BRI3BP"/>
</dbReference>
<dbReference type="PANTHER" id="PTHR31253">
    <property type="entry name" value="BRI3-BINDING PROTEIN"/>
    <property type="match status" value="1"/>
</dbReference>
<dbReference type="PANTHER" id="PTHR31253:SF0">
    <property type="entry name" value="BRI3-BINDING PROTEIN"/>
    <property type="match status" value="1"/>
</dbReference>
<dbReference type="Pfam" id="PF14965">
    <property type="entry name" value="BRI3BP"/>
    <property type="match status" value="1"/>
</dbReference>